<keyword id="KW-0010">Activator</keyword>
<keyword id="KW-0025">Alternative splicing</keyword>
<keyword id="KW-0238">DNA-binding</keyword>
<keyword id="KW-0539">Nucleus</keyword>
<keyword id="KW-1185">Reference proteome</keyword>
<keyword id="KW-0804">Transcription</keyword>
<keyword id="KW-0805">Transcription regulation</keyword>
<proteinExistence type="evidence at protein level"/>
<organism>
    <name type="scientific">Mus musculus</name>
    <name type="common">Mouse</name>
    <dbReference type="NCBI Taxonomy" id="10090"/>
    <lineage>
        <taxon>Eukaryota</taxon>
        <taxon>Metazoa</taxon>
        <taxon>Chordata</taxon>
        <taxon>Craniata</taxon>
        <taxon>Vertebrata</taxon>
        <taxon>Euteleostomi</taxon>
        <taxon>Mammalia</taxon>
        <taxon>Eutheria</taxon>
        <taxon>Euarchontoglires</taxon>
        <taxon>Glires</taxon>
        <taxon>Rodentia</taxon>
        <taxon>Myomorpha</taxon>
        <taxon>Muroidea</taxon>
        <taxon>Muridae</taxon>
        <taxon>Murinae</taxon>
        <taxon>Mus</taxon>
        <taxon>Mus</taxon>
    </lineage>
</organism>
<comment type="function">
    <text evidence="4 5 6 7">Transcriptional activator. Recognizes and binds to the DNA sequence 5'-TGT[GT][GT]ATT-3'. Required for induction of the goosecoid (GSC) promoter by TGF-beta or activin signaling. Forms a transcriptionally active complex containing FOXH1/SMAD2/SMAD4 on a site on the GSC promoter called TARE (TGF-beta/activin response element).</text>
</comment>
<comment type="subunit">
    <text evidence="4">Interacts with the MH2 domains of SMAD2 and SMAD3.</text>
</comment>
<comment type="interaction">
    <interactant intactId="EBI-7457430">
        <id>O88621</id>
    </interactant>
    <interactant intactId="EBI-7457485">
        <id>Q02591</id>
        <label>Gsc</label>
    </interactant>
    <organismsDiffer>false</organismsDiffer>
    <experiments>2</experiments>
</comment>
<comment type="subcellular location">
    <subcellularLocation>
        <location>Nucleus</location>
    </subcellularLocation>
</comment>
<comment type="alternative products">
    <event type="alternative splicing"/>
    <isoform>
        <id>O88621-1</id>
        <name>Long</name>
        <sequence type="displayed"/>
    </isoform>
    <isoform>
        <id>O88621-2</id>
        <name>Short</name>
        <sequence type="described" ref="VSP_001542"/>
    </isoform>
</comment>
<comment type="developmental stage">
    <text evidence="4">Expressed predominantly throughout the epiblast before gastrulation and declines as development progresses.</text>
</comment>
<comment type="domain">
    <text evidence="1">The FM region is required for binding SMAD2/SMAD4 complexes. FM2 is more effective than FM1 and only interacts with phosphorylated SMAD2 that is in an activated SMAD complex (By similarity).</text>
</comment>
<comment type="miscellaneous">
    <molecule>Isoform Short</molecule>
    <text evidence="9">Fails to bind DNA and cannot confer activin response element responsiveness.</text>
</comment>
<reference key="1">
    <citation type="journal article" date="1998" name="Mol. Cell">
        <title>Smad2 and Smad3 positively and negatively regulate TGF beta-dependent transcription through the forkhead DNA-binding protein FAST2.</title>
        <authorList>
            <person name="Labbe E."/>
            <person name="Silvestri C."/>
            <person name="Hoodless P.A."/>
            <person name="Wrana J.L."/>
            <person name="Attisano L."/>
        </authorList>
    </citation>
    <scope>NUCLEOTIDE SEQUENCE [MRNA] (ISOFORM LONG)</scope>
    <scope>FUNCTION</scope>
    <source>
        <tissue>Embryonic carcinoma</tissue>
    </source>
</reference>
<reference key="2">
    <citation type="journal article" date="1999" name="Mol. Cell. Biol.">
        <title>FAST-2 is a mammalian winged-helix protein which mediates transforming growth factor beta signals.</title>
        <authorList>
            <person name="Liu B."/>
            <person name="Dou C.-L."/>
            <person name="Prabhu L."/>
            <person name="Lai E."/>
        </authorList>
    </citation>
    <scope>NUCLEOTIDE SEQUENCE [MRNA] (ISOFORM LONG)</scope>
    <scope>FUNCTION</scope>
    <source>
        <tissue>Embryonic carcinoma</tissue>
    </source>
</reference>
<reference key="3">
    <citation type="journal article" date="1998" name="Mech. Dev.">
        <title>A mouse homologue of FAST-1 transduces TGF beta superfamily signals and is expressed during early embryogenesis.</title>
        <authorList>
            <person name="Weisberg E."/>
            <person name="Winnier G.E."/>
            <person name="Chen X."/>
            <person name="Farnsworth C.L."/>
            <person name="Hogan B.L.H."/>
            <person name="Whitman M."/>
        </authorList>
    </citation>
    <scope>NUCLEOTIDE SEQUENCE [MRNA] (ISOFORMS LONG AND SHORT)</scope>
    <scope>FUNCTION</scope>
    <scope>INTERACTION WITH SMAD2 AND SMAD3</scope>
    <scope>DEVELOPMENTAL STAGE</scope>
    <source>
        <tissue>Embryo</tissue>
    </source>
</reference>
<reference key="4">
    <citation type="submission" date="1998-12" db="EMBL/GenBank/DDBJ databases">
        <title>Mouse FAST-2 transduces the signals for TGF-beta and activin.</title>
        <authorList>
            <person name="Chen Y."/>
            <person name="Nagarajan R.P."/>
            <person name="Liu J."/>
            <person name="Vale W."/>
        </authorList>
    </citation>
    <scope>NUCLEOTIDE SEQUENCE [MRNA] (ISOFORM LONG)</scope>
    <scope>FUNCTION</scope>
</reference>
<feature type="chain" id="PRO_0000091843" description="Forkhead box protein H1">
    <location>
        <begin position="1"/>
        <end position="401"/>
    </location>
</feature>
<feature type="DNA-binding region" description="Fork-head" evidence="2">
    <location>
        <begin position="64"/>
        <end position="163"/>
    </location>
</feature>
<feature type="region of interest" description="Disordered" evidence="3">
    <location>
        <begin position="32"/>
        <end position="57"/>
    </location>
</feature>
<feature type="region of interest" description="Disordered" evidence="3">
    <location>
        <begin position="179"/>
        <end position="251"/>
    </location>
</feature>
<feature type="region of interest" description="SMAD-interaction domain (SID)">
    <location>
        <begin position="307"/>
        <end position="390"/>
    </location>
</feature>
<feature type="short sequence motif" description="Fast/FoxH1 motif 1 (FM1)">
    <location>
        <begin position="311"/>
        <end position="315"/>
    </location>
</feature>
<feature type="short sequence motif" description="Fast/FoxH1 motif 2 (FM2)">
    <location>
        <begin position="321"/>
        <end position="327"/>
    </location>
</feature>
<feature type="short sequence motif" description="SMAD interaction motif (SIM)">
    <location>
        <begin position="363"/>
        <end position="384"/>
    </location>
</feature>
<feature type="compositionally biased region" description="Pro residues" evidence="3">
    <location>
        <begin position="185"/>
        <end position="195"/>
    </location>
</feature>
<feature type="compositionally biased region" description="Polar residues" evidence="3">
    <location>
        <begin position="221"/>
        <end position="230"/>
    </location>
</feature>
<feature type="splice variant" id="VSP_001542" description="In isoform Short." evidence="8">
    <location>
        <begin position="89"/>
        <end position="92"/>
    </location>
</feature>
<feature type="sequence conflict" description="In Ref. 3; AAD55949." evidence="9" ref="3">
    <original>T</original>
    <variation>A</variation>
    <location>
        <position position="167"/>
    </location>
</feature>
<feature type="sequence conflict" description="In Ref. 4; AAD14683." evidence="9" ref="4">
    <original>P</original>
    <variation>L</variation>
    <location>
        <position position="207"/>
    </location>
</feature>
<feature type="sequence conflict" description="In Ref. 4; AAD14683." evidence="9" ref="4">
    <original>Q</original>
    <variation>K</variation>
    <location>
        <position position="215"/>
    </location>
</feature>
<feature type="sequence conflict" description="In Ref. 4; AAD14683." evidence="9" ref="4">
    <original>P</original>
    <variation>L</variation>
    <location>
        <position position="220"/>
    </location>
</feature>
<feature type="sequence conflict" description="In Ref. 3; AAD55949." evidence="9" ref="3">
    <original>S</original>
    <variation>N</variation>
    <location>
        <position position="223"/>
    </location>
</feature>
<feature type="sequence conflict" description="In Ref. 3; AAD55949." evidence="9" ref="3">
    <original>G</original>
    <variation>R</variation>
    <location>
        <position position="237"/>
    </location>
</feature>
<feature type="sequence conflict" description="In Ref. 3; AAD55949." evidence="9" ref="3">
    <original>L</original>
    <variation>I</variation>
    <location>
        <position position="330"/>
    </location>
</feature>
<feature type="sequence conflict" description="In Ref. 3; AAD55949." evidence="9" ref="3">
    <original>S</original>
    <variation>C</variation>
    <location>
        <position position="334"/>
    </location>
</feature>
<feature type="sequence conflict" description="In Ref. 3; AAD55949." evidence="9" ref="3">
    <original>S</original>
    <variation>F</variation>
    <location>
        <position position="340"/>
    </location>
</feature>
<feature type="sequence conflict" description="In Ref. 3; AAD55949." evidence="9" ref="3">
    <original>L</original>
    <variation>F</variation>
    <location>
        <position position="366"/>
    </location>
</feature>
<sequence length="401" mass="44001">MASGWDLASTYTPTTPSPQLALAPAQGYLPCMGPRDNSQLRPPEAESLSKTPKRRKKRYLRHDKPPYTYLAMIALVIQAAPFRRLKLAQIIRQVQAVFPFFRDDYEGWKDSIRHNLSSNRCFHKVPKDPAKPQAKGNFWAVDVSLIPAEALRLQNTALCRRWQNRGTHRAFAKDLSPYVLHGQPYQPPSPPPPPREGFSIKSLLGDPGKESTWPQHPGLPGQSTAAQAGTLSKGEEGMGTGPSSSSETPLWPLCSLPGPTIIEGESSQGEVIRPSPVTPDQGSWPLHLLEDSADSRGVPRRGSRASLWGQLPTSYLPIYTPNVVMPLATLPTTSCPQCPSSASPAYWSVGTESQGSQDLLCDLDSLFQGVPPNKSIYDVWVSHPRDLAAPAPGWLLSWYSM</sequence>
<accession>O88621</accession>
<accession>Q9QZL5</accession>
<accession>Q9R241</accession>
<dbReference type="EMBL" id="AF069303">
    <property type="protein sequence ID" value="AAC79808.1"/>
    <property type="molecule type" value="mRNA"/>
</dbReference>
<dbReference type="EMBL" id="AF079514">
    <property type="protein sequence ID" value="AAD12486.1"/>
    <property type="molecule type" value="mRNA"/>
</dbReference>
<dbReference type="EMBL" id="AF177770">
    <property type="protein sequence ID" value="AAD55949.1"/>
    <property type="molecule type" value="mRNA"/>
</dbReference>
<dbReference type="EMBL" id="AF110506">
    <property type="protein sequence ID" value="AAD14683.1"/>
    <property type="molecule type" value="mRNA"/>
</dbReference>
<dbReference type="CCDS" id="CCDS27584.1">
    <molecule id="O88621-1"/>
</dbReference>
<dbReference type="RefSeq" id="NP_032015.1">
    <molecule id="O88621-1"/>
    <property type="nucleotide sequence ID" value="NM_007989.4"/>
</dbReference>
<dbReference type="RefSeq" id="XP_006520499.1">
    <molecule id="O88621-2"/>
    <property type="nucleotide sequence ID" value="XM_006520436.5"/>
</dbReference>
<dbReference type="SMR" id="O88621"/>
<dbReference type="BioGRID" id="199598">
    <property type="interactions" value="7"/>
</dbReference>
<dbReference type="CORUM" id="O88621"/>
<dbReference type="FunCoup" id="O88621">
    <property type="interactions" value="440"/>
</dbReference>
<dbReference type="IntAct" id="O88621">
    <property type="interactions" value="6"/>
</dbReference>
<dbReference type="MINT" id="O88621"/>
<dbReference type="STRING" id="10090.ENSMUSP00000036591"/>
<dbReference type="GlyGen" id="O88621">
    <property type="glycosylation" value="1 site"/>
</dbReference>
<dbReference type="iPTMnet" id="O88621"/>
<dbReference type="PhosphoSitePlus" id="O88621"/>
<dbReference type="PaxDb" id="10090-ENSMUSP00000036591"/>
<dbReference type="Antibodypedia" id="28549">
    <property type="antibodies" value="249 antibodies from 33 providers"/>
</dbReference>
<dbReference type="DNASU" id="14106"/>
<dbReference type="Ensembl" id="ENSMUST00000037824.6">
    <molecule id="O88621-1"/>
    <property type="protein sequence ID" value="ENSMUSP00000036591.5"/>
    <property type="gene ID" value="ENSMUSG00000033837.6"/>
</dbReference>
<dbReference type="GeneID" id="14106"/>
<dbReference type="KEGG" id="mmu:14106"/>
<dbReference type="UCSC" id="uc007wlm.2">
    <molecule id="O88621-1"/>
    <property type="organism name" value="mouse"/>
</dbReference>
<dbReference type="AGR" id="MGI:1347465"/>
<dbReference type="CTD" id="8928"/>
<dbReference type="MGI" id="MGI:1347465">
    <property type="gene designation" value="Foxh1"/>
</dbReference>
<dbReference type="VEuPathDB" id="HostDB:ENSMUSG00000033837"/>
<dbReference type="eggNOG" id="KOG2294">
    <property type="taxonomic scope" value="Eukaryota"/>
</dbReference>
<dbReference type="GeneTree" id="ENSGT00940000159537"/>
<dbReference type="HOGENOM" id="CLU_039733_0_0_1"/>
<dbReference type="InParanoid" id="O88621"/>
<dbReference type="OMA" id="QCPPSNS"/>
<dbReference type="OrthoDB" id="5954824at2759"/>
<dbReference type="PhylomeDB" id="O88621"/>
<dbReference type="TreeFam" id="TF350620"/>
<dbReference type="BioGRID-ORCS" id="14106">
    <property type="hits" value="4 hits in 80 CRISPR screens"/>
</dbReference>
<dbReference type="PRO" id="PR:O88621"/>
<dbReference type="Proteomes" id="UP000000589">
    <property type="component" value="Chromosome 15"/>
</dbReference>
<dbReference type="RNAct" id="O88621">
    <property type="molecule type" value="protein"/>
</dbReference>
<dbReference type="Bgee" id="ENSMUSG00000033837">
    <property type="expression patterns" value="Expressed in epiblast (generic) and 60 other cell types or tissues"/>
</dbReference>
<dbReference type="ExpressionAtlas" id="O88621">
    <property type="expression patterns" value="baseline and differential"/>
</dbReference>
<dbReference type="GO" id="GO:0032444">
    <property type="term" value="C:activin responsive factor complex"/>
    <property type="evidence" value="ECO:0000314"/>
    <property type="project" value="UniProtKB"/>
</dbReference>
<dbReference type="GO" id="GO:0000785">
    <property type="term" value="C:chromatin"/>
    <property type="evidence" value="ECO:0007669"/>
    <property type="project" value="Ensembl"/>
</dbReference>
<dbReference type="GO" id="GO:0005654">
    <property type="term" value="C:nucleoplasm"/>
    <property type="evidence" value="ECO:0000304"/>
    <property type="project" value="Reactome"/>
</dbReference>
<dbReference type="GO" id="GO:0005634">
    <property type="term" value="C:nucleus"/>
    <property type="evidence" value="ECO:0000314"/>
    <property type="project" value="MGI"/>
</dbReference>
<dbReference type="GO" id="GO:0005667">
    <property type="term" value="C:transcription regulator complex"/>
    <property type="evidence" value="ECO:0000314"/>
    <property type="project" value="MGI"/>
</dbReference>
<dbReference type="GO" id="GO:0043425">
    <property type="term" value="F:bHLH transcription factor binding"/>
    <property type="evidence" value="ECO:0007669"/>
    <property type="project" value="Ensembl"/>
</dbReference>
<dbReference type="GO" id="GO:0070410">
    <property type="term" value="F:co-SMAD binding"/>
    <property type="evidence" value="ECO:0007669"/>
    <property type="project" value="Ensembl"/>
</dbReference>
<dbReference type="GO" id="GO:0003677">
    <property type="term" value="F:DNA binding"/>
    <property type="evidence" value="ECO:0000314"/>
    <property type="project" value="MGI"/>
</dbReference>
<dbReference type="GO" id="GO:0001228">
    <property type="term" value="F:DNA-binding transcription activator activity, RNA polymerase II-specific"/>
    <property type="evidence" value="ECO:0000314"/>
    <property type="project" value="MGI"/>
</dbReference>
<dbReference type="GO" id="GO:0003700">
    <property type="term" value="F:DNA-binding transcription factor activity"/>
    <property type="evidence" value="ECO:0000314"/>
    <property type="project" value="MGI"/>
</dbReference>
<dbReference type="GO" id="GO:0050681">
    <property type="term" value="F:nuclear androgen receptor binding"/>
    <property type="evidence" value="ECO:0007669"/>
    <property type="project" value="Ensembl"/>
</dbReference>
<dbReference type="GO" id="GO:0019904">
    <property type="term" value="F:protein domain specific binding"/>
    <property type="evidence" value="ECO:0007669"/>
    <property type="project" value="Ensembl"/>
</dbReference>
<dbReference type="GO" id="GO:0070412">
    <property type="term" value="F:R-SMAD binding"/>
    <property type="evidence" value="ECO:0000314"/>
    <property type="project" value="BHF-UCL"/>
</dbReference>
<dbReference type="GO" id="GO:0043565">
    <property type="term" value="F:sequence-specific DNA binding"/>
    <property type="evidence" value="ECO:0000314"/>
    <property type="project" value="MGI"/>
</dbReference>
<dbReference type="GO" id="GO:0046332">
    <property type="term" value="F:SMAD binding"/>
    <property type="evidence" value="ECO:0000353"/>
    <property type="project" value="UniProtKB"/>
</dbReference>
<dbReference type="GO" id="GO:0000976">
    <property type="term" value="F:transcription cis-regulatory region binding"/>
    <property type="evidence" value="ECO:0000314"/>
    <property type="project" value="BHF-UCL"/>
</dbReference>
<dbReference type="GO" id="GO:0003714">
    <property type="term" value="F:transcription corepressor activity"/>
    <property type="evidence" value="ECO:0007669"/>
    <property type="project" value="Ensembl"/>
</dbReference>
<dbReference type="GO" id="GO:0009952">
    <property type="term" value="P:anterior/posterior pattern specification"/>
    <property type="evidence" value="ECO:0000315"/>
    <property type="project" value="MGI"/>
</dbReference>
<dbReference type="GO" id="GO:0035909">
    <property type="term" value="P:aorta morphogenesis"/>
    <property type="evidence" value="ECO:0000315"/>
    <property type="project" value="BHF-UCL"/>
</dbReference>
<dbReference type="GO" id="GO:0048318">
    <property type="term" value="P:axial mesoderm development"/>
    <property type="evidence" value="ECO:0000315"/>
    <property type="project" value="MGI"/>
</dbReference>
<dbReference type="GO" id="GO:0003215">
    <property type="term" value="P:cardiac right ventricle morphogenesis"/>
    <property type="evidence" value="ECO:0000315"/>
    <property type="project" value="BHF-UCL"/>
</dbReference>
<dbReference type="GO" id="GO:0071345">
    <property type="term" value="P:cellular response to cytokine stimulus"/>
    <property type="evidence" value="ECO:0000250"/>
    <property type="project" value="UniProtKB"/>
</dbReference>
<dbReference type="GO" id="GO:0007368">
    <property type="term" value="P:determination of left/right symmetry"/>
    <property type="evidence" value="ECO:0000315"/>
    <property type="project" value="MGI"/>
</dbReference>
<dbReference type="GO" id="GO:0035054">
    <property type="term" value="P:embryonic heart tube anterior/posterior pattern specification"/>
    <property type="evidence" value="ECO:0000315"/>
    <property type="project" value="MGI"/>
</dbReference>
<dbReference type="GO" id="GO:0001947">
    <property type="term" value="P:heart looping"/>
    <property type="evidence" value="ECO:0000315"/>
    <property type="project" value="BHF-UCL"/>
</dbReference>
<dbReference type="GO" id="GO:0070365">
    <property type="term" value="P:hepatocyte differentiation"/>
    <property type="evidence" value="ECO:0007669"/>
    <property type="project" value="Ensembl"/>
</dbReference>
<dbReference type="GO" id="GO:0060766">
    <property type="term" value="P:negative regulation of androgen receptor signaling pathway"/>
    <property type="evidence" value="ECO:0007669"/>
    <property type="project" value="Ensembl"/>
</dbReference>
<dbReference type="GO" id="GO:0000122">
    <property type="term" value="P:negative regulation of transcription by RNA polymerase II"/>
    <property type="evidence" value="ECO:0000315"/>
    <property type="project" value="BHF-UCL"/>
</dbReference>
<dbReference type="GO" id="GO:0003151">
    <property type="term" value="P:outflow tract morphogenesis"/>
    <property type="evidence" value="ECO:0000315"/>
    <property type="project" value="BHF-UCL"/>
</dbReference>
<dbReference type="GO" id="GO:0045893">
    <property type="term" value="P:positive regulation of DNA-templated transcription"/>
    <property type="evidence" value="ECO:0000314"/>
    <property type="project" value="UniProtKB"/>
</dbReference>
<dbReference type="GO" id="GO:0045944">
    <property type="term" value="P:positive regulation of transcription by RNA polymerase II"/>
    <property type="evidence" value="ECO:0000314"/>
    <property type="project" value="UniProtKB"/>
</dbReference>
<dbReference type="GO" id="GO:0006357">
    <property type="term" value="P:regulation of transcription by RNA polymerase II"/>
    <property type="evidence" value="ECO:0000314"/>
    <property type="project" value="MGI"/>
</dbReference>
<dbReference type="GO" id="GO:0003139">
    <property type="term" value="P:secondary heart field specification"/>
    <property type="evidence" value="ECO:0000315"/>
    <property type="project" value="BHF-UCL"/>
</dbReference>
<dbReference type="GO" id="GO:0007179">
    <property type="term" value="P:transforming growth factor beta receptor signaling pathway"/>
    <property type="evidence" value="ECO:0000314"/>
    <property type="project" value="UniProtKB"/>
</dbReference>
<dbReference type="GO" id="GO:0003222">
    <property type="term" value="P:ventricular trabecula myocardium morphogenesis"/>
    <property type="evidence" value="ECO:0000315"/>
    <property type="project" value="BHF-UCL"/>
</dbReference>
<dbReference type="CDD" id="cd20022">
    <property type="entry name" value="FH_FOXH"/>
    <property type="match status" value="1"/>
</dbReference>
<dbReference type="FunFam" id="1.10.10.10:FF:000278">
    <property type="entry name" value="Forkhead box protein H1"/>
    <property type="match status" value="1"/>
</dbReference>
<dbReference type="Gene3D" id="1.10.10.10">
    <property type="entry name" value="Winged helix-like DNA-binding domain superfamily/Winged helix DNA-binding domain"/>
    <property type="match status" value="1"/>
</dbReference>
<dbReference type="InterPro" id="IPR052327">
    <property type="entry name" value="Activin_resp_transcr_regulator"/>
</dbReference>
<dbReference type="InterPro" id="IPR047511">
    <property type="entry name" value="FH_FOXH1"/>
</dbReference>
<dbReference type="InterPro" id="IPR001766">
    <property type="entry name" value="Fork_head_dom"/>
</dbReference>
<dbReference type="InterPro" id="IPR030456">
    <property type="entry name" value="TF_fork_head_CS_2"/>
</dbReference>
<dbReference type="InterPro" id="IPR036388">
    <property type="entry name" value="WH-like_DNA-bd_sf"/>
</dbReference>
<dbReference type="InterPro" id="IPR036390">
    <property type="entry name" value="WH_DNA-bd_sf"/>
</dbReference>
<dbReference type="PANTHER" id="PTHR47316">
    <property type="entry name" value="FORKHEAD BOX PROTEIN H1"/>
    <property type="match status" value="1"/>
</dbReference>
<dbReference type="PANTHER" id="PTHR47316:SF1">
    <property type="entry name" value="FORKHEAD BOX PROTEIN H1"/>
    <property type="match status" value="1"/>
</dbReference>
<dbReference type="Pfam" id="PF00250">
    <property type="entry name" value="Forkhead"/>
    <property type="match status" value="1"/>
</dbReference>
<dbReference type="PRINTS" id="PR00053">
    <property type="entry name" value="FORKHEAD"/>
</dbReference>
<dbReference type="SMART" id="SM00339">
    <property type="entry name" value="FH"/>
    <property type="match status" value="1"/>
</dbReference>
<dbReference type="SUPFAM" id="SSF46785">
    <property type="entry name" value="Winged helix' DNA-binding domain"/>
    <property type="match status" value="1"/>
</dbReference>
<dbReference type="PROSITE" id="PS00658">
    <property type="entry name" value="FORK_HEAD_2"/>
    <property type="match status" value="1"/>
</dbReference>
<dbReference type="PROSITE" id="PS50039">
    <property type="entry name" value="FORK_HEAD_3"/>
    <property type="match status" value="1"/>
</dbReference>
<protein>
    <recommendedName>
        <fullName>Forkhead box protein H1</fullName>
    </recommendedName>
    <alternativeName>
        <fullName>Forkhead activin signal transducer 1</fullName>
        <shortName>Fast-1</shortName>
    </alternativeName>
    <alternativeName>
        <fullName>Forkhead activin signal transducer 2</fullName>
        <shortName>Fast-2</shortName>
    </alternativeName>
</protein>
<name>FOXH1_MOUSE</name>
<gene>
    <name type="primary">Foxh1</name>
    <name type="synonym">Fast1</name>
    <name type="synonym">Fast2</name>
</gene>
<evidence type="ECO:0000250" key="1"/>
<evidence type="ECO:0000255" key="2">
    <source>
        <dbReference type="PROSITE-ProRule" id="PRU00089"/>
    </source>
</evidence>
<evidence type="ECO:0000256" key="3">
    <source>
        <dbReference type="SAM" id="MobiDB-lite"/>
    </source>
</evidence>
<evidence type="ECO:0000269" key="4">
    <source>
    </source>
</evidence>
<evidence type="ECO:0000269" key="5">
    <source>
    </source>
</evidence>
<evidence type="ECO:0000269" key="6">
    <source>
    </source>
</evidence>
<evidence type="ECO:0000269" key="7">
    <source ref="4"/>
</evidence>
<evidence type="ECO:0000303" key="8">
    <source>
    </source>
</evidence>
<evidence type="ECO:0000305" key="9"/>